<feature type="signal peptide" evidence="4">
    <location>
        <begin position="1"/>
        <end position="18"/>
    </location>
</feature>
<feature type="propeptide" id="PRO_0000424296" description="Activation peptide" evidence="18">
    <location>
        <begin position="19"/>
        <end position="75"/>
    </location>
</feature>
<feature type="chain" id="PRO_0000424297" description="Secreted aspartic protease 4">
    <location>
        <begin position="76"/>
        <end position="417"/>
    </location>
</feature>
<feature type="domain" description="Peptidase A1" evidence="5">
    <location>
        <begin position="89"/>
        <end position="403"/>
    </location>
</feature>
<feature type="active site" evidence="6">
    <location>
        <position position="107"/>
    </location>
</feature>
<feature type="active site" evidence="6">
    <location>
        <position position="293"/>
    </location>
</feature>
<feature type="binding site" evidence="3">
    <location>
        <begin position="107"/>
        <end position="109"/>
    </location>
    <ligand>
        <name>pepstatin A</name>
        <dbReference type="ChEBI" id="CHEBI:190525"/>
        <note>inhibitor</note>
    </ligand>
</feature>
<feature type="binding site" evidence="3">
    <location>
        <begin position="160"/>
        <end position="161"/>
    </location>
    <ligand>
        <name>pepstatin A</name>
        <dbReference type="ChEBI" id="CHEBI:190525"/>
        <note>inhibitor</note>
    </ligand>
</feature>
<feature type="binding site" evidence="3">
    <location>
        <position position="267"/>
    </location>
    <ligand>
        <name>Zn(2+)</name>
        <dbReference type="ChEBI" id="CHEBI:29105"/>
    </ligand>
</feature>
<feature type="binding site" evidence="3">
    <location>
        <begin position="293"/>
        <end position="297"/>
    </location>
    <ligand>
        <name>pepstatin A</name>
        <dbReference type="ChEBI" id="CHEBI:190525"/>
        <note>inhibitor</note>
    </ligand>
</feature>
<feature type="glycosylation site" description="N-linked (GlcNAc...) asparagine" evidence="4">
    <location>
        <position position="137"/>
    </location>
</feature>
<feature type="disulfide bond" evidence="2">
    <location>
        <begin position="122"/>
        <end position="134"/>
    </location>
</feature>
<feature type="disulfide bond" evidence="2">
    <location>
        <begin position="331"/>
        <end position="369"/>
    </location>
</feature>
<organism>
    <name type="scientific">Candida albicans (strain SC5314 / ATCC MYA-2876)</name>
    <name type="common">Yeast</name>
    <dbReference type="NCBI Taxonomy" id="237561"/>
    <lineage>
        <taxon>Eukaryota</taxon>
        <taxon>Fungi</taxon>
        <taxon>Dikarya</taxon>
        <taxon>Ascomycota</taxon>
        <taxon>Saccharomycotina</taxon>
        <taxon>Pichiomycetes</taxon>
        <taxon>Debaryomycetaceae</taxon>
        <taxon>Candida/Lodderomyces clade</taxon>
        <taxon>Candida</taxon>
    </lineage>
</organism>
<gene>
    <name evidence="17" type="primary">SAP4</name>
    <name type="ordered locus">CAALFM_C603500CA</name>
    <name type="ORF">CaO19.13139</name>
    <name type="ORF">CaO19.5716</name>
</gene>
<protein>
    <recommendedName>
        <fullName evidence="17">Secreted aspartic protease 4</fullName>
        <shortName evidence="18">ACP 4</shortName>
        <shortName evidence="18">Aspartate protease 4</shortName>
        <ecNumber evidence="12 16">3.4.23.24</ecNumber>
    </recommendedName>
    <alternativeName>
        <fullName evidence="18">Candidapepsin-4</fullName>
    </alternativeName>
</protein>
<comment type="function">
    <text evidence="7 8 11 15">Secreted aspartic peptidases (SAPs) are a group of ten acidic hydrolases considered as key virulence factors (PubMed:11478679, PubMed:12065511, PubMed:21540243). These enzymes supply the fungus with nutrient amino acids as well as are able to degrade the selected host's proteins involved in the immune defense (PubMed:11478679, PubMed:12065511, PubMed:21540243). Moreover, acts toward human hemoglobin though limited proteolysis to generate a variety of antimicrobial hemocidins, enabling to compete with the other microorganisms of the same physiological niche using the microbicidal peptides generated from the host protein (PubMed:23927842).</text>
</comment>
<comment type="function">
    <text evidence="16">Plays a key role in defense against host by cleaving histatin-5 (Hst 5), a peptide from human saliva that carries out fungicidal activity (PubMed:27390786). The cleavage rate decreases in an order of SAP2 &gt; SAP9 &gt; SAP3 &gt; SAP7 &gt; SAP4 &gt; SAP1 &gt; SAP8 (PubMed:27390786). The first cleavage occurs between residues 'Lys-17' and 'His-18' of Hst 5, giving DSHAKRHHGYKRKFHEK and HHSHRGY peptides (PubMed:27390786). Simultaneously, the DSHAKRHHGY and KRKFHEKHHSHRGY peptides are also formed (PubMed:27390786).</text>
</comment>
<comment type="catalytic activity">
    <reaction evidence="12 16">
        <text>Preferential cleavage at the carboxyl of hydrophobic amino acids, but fails to cleave 15-Leu-|-Tyr-16, 16-Tyr-|-Leu-17 and 24-Phe-|-Phe-25 of insulin B chain. Activates trypsinogen, and degrades keratin.</text>
        <dbReference type="EC" id="3.4.23.24"/>
    </reaction>
</comment>
<comment type="activity regulation">
    <text evidence="9">Activity is inhibited by squash aspartic peptidase inhibitor (SQAPI).</text>
</comment>
<comment type="biophysicochemical properties">
    <phDependence>
        <text evidence="12 16">Optimum pH is 5.0 using casein-resorufin as substrate, and 6.0-7.0, the pH of the saliva, for cleavage of Hst 5.</text>
    </phDependence>
</comment>
<comment type="subunit">
    <text evidence="1">Monomer.</text>
</comment>
<comment type="subcellular location">
    <subcellularLocation>
        <location evidence="2">Secreted</location>
    </subcellularLocation>
</comment>
<comment type="induction">
    <text evidence="10 13 14">Expressed during development of germ tubes, pseudohyphae and true hyphae (PubMed:23484407). Induced during host infection (PubMed:15731084). Expression is suppressed by fluconazole (PubMed:22433888).</text>
</comment>
<comment type="similarity">
    <text evidence="18">Belongs to the peptidase A1 family.</text>
</comment>
<proteinExistence type="evidence at protein level"/>
<evidence type="ECO:0000250" key="1">
    <source>
        <dbReference type="UniProtKB" id="P0CS83"/>
    </source>
</evidence>
<evidence type="ECO:0000250" key="2">
    <source>
        <dbReference type="UniProtKB" id="P0CY27"/>
    </source>
</evidence>
<evidence type="ECO:0000250" key="3">
    <source>
        <dbReference type="UniProtKB" id="P0CY29"/>
    </source>
</evidence>
<evidence type="ECO:0000255" key="4"/>
<evidence type="ECO:0000255" key="5">
    <source>
        <dbReference type="PROSITE-ProRule" id="PRU01103"/>
    </source>
</evidence>
<evidence type="ECO:0000255" key="6">
    <source>
        <dbReference type="PROSITE-ProRule" id="PRU10094"/>
    </source>
</evidence>
<evidence type="ECO:0000269" key="7">
    <source>
    </source>
</evidence>
<evidence type="ECO:0000269" key="8">
    <source>
    </source>
</evidence>
<evidence type="ECO:0000269" key="9">
    <source>
    </source>
</evidence>
<evidence type="ECO:0000269" key="10">
    <source>
    </source>
</evidence>
<evidence type="ECO:0000269" key="11">
    <source>
    </source>
</evidence>
<evidence type="ECO:0000269" key="12">
    <source>
    </source>
</evidence>
<evidence type="ECO:0000269" key="13">
    <source>
    </source>
</evidence>
<evidence type="ECO:0000269" key="14">
    <source>
    </source>
</evidence>
<evidence type="ECO:0000269" key="15">
    <source>
    </source>
</evidence>
<evidence type="ECO:0000269" key="16">
    <source>
    </source>
</evidence>
<evidence type="ECO:0000303" key="17">
    <source>
    </source>
</evidence>
<evidence type="ECO:0000305" key="18"/>
<dbReference type="EC" id="3.4.23.24" evidence="12 16"/>
<dbReference type="EMBL" id="CP017628">
    <property type="protein sequence ID" value="AOW30280.1"/>
    <property type="molecule type" value="Genomic_DNA"/>
</dbReference>
<dbReference type="RefSeq" id="XP_718054.1">
    <property type="nucleotide sequence ID" value="XM_712961.1"/>
</dbReference>
<dbReference type="SMR" id="Q5A8N2"/>
<dbReference type="STRING" id="237561.Q5A8N2"/>
<dbReference type="MEROPS" id="A01.062"/>
<dbReference type="GlyCosmos" id="Q5A8N2">
    <property type="glycosylation" value="1 site, No reported glycans"/>
</dbReference>
<dbReference type="EnsemblFungi" id="C6_03500C_A-T">
    <property type="protein sequence ID" value="C6_03500C_A-T-p1"/>
    <property type="gene ID" value="C6_03500C_A"/>
</dbReference>
<dbReference type="GeneID" id="3640257"/>
<dbReference type="KEGG" id="cal:CAALFM_C603500CA"/>
<dbReference type="CGD" id="CAL0000194858">
    <property type="gene designation" value="SAP4"/>
</dbReference>
<dbReference type="VEuPathDB" id="FungiDB:C6_03500C_A"/>
<dbReference type="eggNOG" id="KOG1339">
    <property type="taxonomic scope" value="Eukaryota"/>
</dbReference>
<dbReference type="HOGENOM" id="CLU_013253_9_1_1"/>
<dbReference type="InParanoid" id="Q5A8N2"/>
<dbReference type="OMA" id="NAVCIPK"/>
<dbReference type="OrthoDB" id="771136at2759"/>
<dbReference type="BRENDA" id="3.4.23.24">
    <property type="organism ID" value="1096"/>
</dbReference>
<dbReference type="PHI-base" id="PHI:6786"/>
<dbReference type="PHI-base" id="PHI:6792"/>
<dbReference type="PHI-base" id="PHI:6807"/>
<dbReference type="PHI-base" id="PHI:6814"/>
<dbReference type="PRO" id="PR:Q5A8N2"/>
<dbReference type="Proteomes" id="UP000000559">
    <property type="component" value="Chromosome 6"/>
</dbReference>
<dbReference type="GO" id="GO:0005576">
    <property type="term" value="C:extracellular region"/>
    <property type="evidence" value="ECO:0000314"/>
    <property type="project" value="CGD"/>
</dbReference>
<dbReference type="GO" id="GO:0009277">
    <property type="term" value="C:fungal-type cell wall"/>
    <property type="evidence" value="ECO:0000318"/>
    <property type="project" value="GO_Central"/>
</dbReference>
<dbReference type="GO" id="GO:0004190">
    <property type="term" value="F:aspartic-type endopeptidase activity"/>
    <property type="evidence" value="ECO:0000314"/>
    <property type="project" value="CGD"/>
</dbReference>
<dbReference type="GO" id="GO:0046872">
    <property type="term" value="F:metal ion binding"/>
    <property type="evidence" value="ECO:0007669"/>
    <property type="project" value="UniProtKB-KW"/>
</dbReference>
<dbReference type="GO" id="GO:0031505">
    <property type="term" value="P:fungal-type cell wall organization"/>
    <property type="evidence" value="ECO:0000318"/>
    <property type="project" value="GO_Central"/>
</dbReference>
<dbReference type="GO" id="GO:0006508">
    <property type="term" value="P:proteolysis"/>
    <property type="evidence" value="ECO:0000314"/>
    <property type="project" value="CGD"/>
</dbReference>
<dbReference type="GO" id="GO:0042783">
    <property type="term" value="P:symbiont-mediated evasion of host immune response"/>
    <property type="evidence" value="ECO:0000270"/>
    <property type="project" value="CGD"/>
</dbReference>
<dbReference type="GO" id="GO:0052553">
    <property type="term" value="P:symbiont-mediated perturbation of host immune response"/>
    <property type="evidence" value="ECO:0000315"/>
    <property type="project" value="CGD"/>
</dbReference>
<dbReference type="CDD" id="cd05474">
    <property type="entry name" value="SAP_like"/>
    <property type="match status" value="1"/>
</dbReference>
<dbReference type="FunFam" id="2.40.70.10:FF:000011">
    <property type="entry name" value="Aspartic protease"/>
    <property type="match status" value="1"/>
</dbReference>
<dbReference type="FunFam" id="2.40.70.10:FF:000023">
    <property type="entry name" value="Aspartic protease"/>
    <property type="match status" value="1"/>
</dbReference>
<dbReference type="Gene3D" id="2.40.70.10">
    <property type="entry name" value="Acid Proteases"/>
    <property type="match status" value="2"/>
</dbReference>
<dbReference type="InterPro" id="IPR001461">
    <property type="entry name" value="Aspartic_peptidase_A1"/>
</dbReference>
<dbReference type="InterPro" id="IPR001969">
    <property type="entry name" value="Aspartic_peptidase_AS"/>
</dbReference>
<dbReference type="InterPro" id="IPR033121">
    <property type="entry name" value="PEPTIDASE_A1"/>
</dbReference>
<dbReference type="InterPro" id="IPR021109">
    <property type="entry name" value="Peptidase_aspartic_dom_sf"/>
</dbReference>
<dbReference type="InterPro" id="IPR033876">
    <property type="entry name" value="SAP-like"/>
</dbReference>
<dbReference type="PANTHER" id="PTHR47966:SF65">
    <property type="entry name" value="ASPARTIC-TYPE ENDOPEPTIDASE"/>
    <property type="match status" value="1"/>
</dbReference>
<dbReference type="PANTHER" id="PTHR47966">
    <property type="entry name" value="BETA-SITE APP-CLEAVING ENZYME, ISOFORM A-RELATED"/>
    <property type="match status" value="1"/>
</dbReference>
<dbReference type="Pfam" id="PF00026">
    <property type="entry name" value="Asp"/>
    <property type="match status" value="1"/>
</dbReference>
<dbReference type="PRINTS" id="PR00792">
    <property type="entry name" value="PEPSIN"/>
</dbReference>
<dbReference type="SUPFAM" id="SSF50630">
    <property type="entry name" value="Acid proteases"/>
    <property type="match status" value="1"/>
</dbReference>
<dbReference type="PROSITE" id="PS00141">
    <property type="entry name" value="ASP_PROTEASE"/>
    <property type="match status" value="2"/>
</dbReference>
<dbReference type="PROSITE" id="PS51767">
    <property type="entry name" value="PEPTIDASE_A1"/>
    <property type="match status" value="1"/>
</dbReference>
<keyword id="KW-0064">Aspartyl protease</keyword>
<keyword id="KW-0165">Cleavage on pair of basic residues</keyword>
<keyword id="KW-1015">Disulfide bond</keyword>
<keyword id="KW-0325">Glycoprotein</keyword>
<keyword id="KW-0378">Hydrolase</keyword>
<keyword id="KW-0479">Metal-binding</keyword>
<keyword id="KW-0645">Protease</keyword>
<keyword id="KW-1185">Reference proteome</keyword>
<keyword id="KW-0677">Repeat</keyword>
<keyword id="KW-0964">Secreted</keyword>
<keyword id="KW-0732">Signal</keyword>
<keyword id="KW-0843">Virulence</keyword>
<keyword id="KW-0862">Zinc</keyword>
<keyword id="KW-0865">Zymogen</keyword>
<name>CARP4_CANAL</name>
<reference key="1">
    <citation type="journal article" date="2004" name="Proc. Natl. Acad. Sci. U.S.A.">
        <title>The diploid genome sequence of Candida albicans.</title>
        <authorList>
            <person name="Jones T."/>
            <person name="Federspiel N.A."/>
            <person name="Chibana H."/>
            <person name="Dungan J."/>
            <person name="Kalman S."/>
            <person name="Magee B.B."/>
            <person name="Newport G."/>
            <person name="Thorstenson Y.R."/>
            <person name="Agabian N."/>
            <person name="Magee P.T."/>
            <person name="Davis R.W."/>
            <person name="Scherer S."/>
        </authorList>
    </citation>
    <scope>NUCLEOTIDE SEQUENCE [LARGE SCALE GENOMIC DNA]</scope>
    <source>
        <strain>SC5314 / ATCC MYA-2876</strain>
    </source>
</reference>
<reference key="2">
    <citation type="journal article" date="2007" name="Genome Biol.">
        <title>Assembly of the Candida albicans genome into sixteen supercontigs aligned on the eight chromosomes.</title>
        <authorList>
            <person name="van het Hoog M."/>
            <person name="Rast T.J."/>
            <person name="Martchenko M."/>
            <person name="Grindle S."/>
            <person name="Dignard D."/>
            <person name="Hogues H."/>
            <person name="Cuomo C."/>
            <person name="Berriman M."/>
            <person name="Scherer S."/>
            <person name="Magee B.B."/>
            <person name="Whiteway M."/>
            <person name="Chibana H."/>
            <person name="Nantel A."/>
            <person name="Magee P.T."/>
        </authorList>
    </citation>
    <scope>GENOME REANNOTATION</scope>
    <source>
        <strain>SC5314 / ATCC MYA-2876</strain>
    </source>
</reference>
<reference key="3">
    <citation type="journal article" date="2013" name="Genome Biol.">
        <title>Assembly of a phased diploid Candida albicans genome facilitates allele-specific measurements and provides a simple model for repeat and indel structure.</title>
        <authorList>
            <person name="Muzzey D."/>
            <person name="Schwartz K."/>
            <person name="Weissman J.S."/>
            <person name="Sherlock G."/>
        </authorList>
    </citation>
    <scope>NUCLEOTIDE SEQUENCE [LARGE SCALE GENOMIC DNA]</scope>
    <scope>GENOME REANNOTATION</scope>
    <source>
        <strain>SC5314 / ATCC MYA-2876</strain>
    </source>
</reference>
<reference key="4">
    <citation type="journal article" date="1994" name="J. Bacteriol.">
        <title>A fourth secreted aspartyl proteinase gene (SAP4) and a CARE2 repetitive element are located upstream of the SAP1 gene in Candida albicans.</title>
        <authorList>
            <person name="Miyasaki S.H."/>
            <person name="White T.C."/>
            <person name="Agabian N."/>
        </authorList>
    </citation>
    <scope>IDENTIFICATION</scope>
</reference>
<reference key="5">
    <citation type="journal article" date="2001" name="J. Med. Microbiol.">
        <title>Different isoforms of secreted aspartyl proteinases (Sap) are expressed by Candida albicans during oral and cutaneous candidosis in vivo.</title>
        <authorList>
            <person name="Schaller M."/>
            <person name="Januschke E."/>
            <person name="Schackert C."/>
            <person name="Woerle B."/>
            <person name="Korting H.C."/>
        </authorList>
    </citation>
    <scope>FUNCTION</scope>
</reference>
<reference key="6">
    <citation type="journal article" date="2002" name="Infect. Immun.">
        <title>Candida albicans hyphal formation and the expression of the Efg1-regulated proteinases Sap4 to Sap6 are required for the invasion of parenchymal organs.</title>
        <authorList>
            <person name="Felk A."/>
            <person name="Kretschmar M."/>
            <person name="Albrecht A."/>
            <person name="Schaller M."/>
            <person name="Beinhauer S."/>
            <person name="Nichterlein T."/>
            <person name="Sanglard D."/>
            <person name="Korting H.C."/>
            <person name="Schafer W."/>
            <person name="Hube B."/>
        </authorList>
    </citation>
    <scope>FUNCTION</scope>
</reference>
<reference key="7">
    <citation type="journal article" date="2002" name="J. Mol. Recognit.">
        <title>Analysis of the interaction between the aspartic peptidase inhibitor SQAPI and aspartic peptidases using surface plasmon resonance.</title>
        <authorList>
            <person name="Farley P.C."/>
            <person name="Christeller J.T."/>
            <person name="Sullivan M.E."/>
            <person name="Sullivan P.A."/>
            <person name="Laing W.A."/>
        </authorList>
    </citation>
    <scope>ACTIVITY REGULATION</scope>
</reference>
<reference key="8">
    <citation type="journal article" date="2005" name="Infect. Immun.">
        <title>Profile of Candida albicans-secreted aspartic proteinase elicited during vaginal infection.</title>
        <authorList>
            <person name="Taylor B.N."/>
            <person name="Staib P."/>
            <person name="Binder A."/>
            <person name="Biesemeier A."/>
            <person name="Sehnal M."/>
            <person name="Rollinghoff M."/>
            <person name="Morschhauser J."/>
            <person name="Schroppel K."/>
        </authorList>
    </citation>
    <scope>INDUCTION</scope>
</reference>
<reference key="9">
    <citation type="journal article" date="2011" name="Dis. Model. Mech.">
        <title>Pathogen and host factors are needed to provoke a systemic host response to gastrointestinal infection of Drosophila larvae by Candida albicans.</title>
        <authorList>
            <person name="Glittenberg M.T."/>
            <person name="Kounatidis I."/>
            <person name="Christensen D."/>
            <person name="Kostov M."/>
            <person name="Kimber S."/>
            <person name="Roberts I."/>
            <person name="Ligoxygakis P."/>
        </authorList>
    </citation>
    <scope>FUNCTION</scope>
</reference>
<reference key="10">
    <citation type="journal article" date="2011" name="J. Biochem.">
        <title>Comprehensive characterization of secreted aspartic proteases encoded by a virulence gene family in Candida albicans.</title>
        <authorList>
            <person name="Aoki W."/>
            <person name="Kitahara N."/>
            <person name="Miura N."/>
            <person name="Morisaka H."/>
            <person name="Yamamoto Y."/>
            <person name="Kuroda K."/>
            <person name="Ueda M."/>
        </authorList>
    </citation>
    <scope>CATALYTIC ACTIVITY</scope>
    <scope>BIOPHYSICOCHEMICAL PROPERTIES</scope>
</reference>
<reference key="11">
    <citation type="journal article" date="2011" name="Trop. Biomed.">
        <title>Expression analysis of SIR2 and SAPs1-4 gene expression in Candida albicans treated with allicin compared to fluconazole.</title>
        <authorList>
            <person name="Khodavandi A."/>
            <person name="Alizadeh F."/>
            <person name="Harmal N.S."/>
            <person name="Sidik S.M."/>
            <person name="Othman F."/>
            <person name="Sekawi Z."/>
            <person name="Chong P.P."/>
        </authorList>
    </citation>
    <scope>INDUCTION</scope>
</reference>
<reference key="12">
    <citation type="journal article" date="2012" name="Pol. J. Microbiol.">
        <title>In vitro study of secreted aspartyl proteinases Sap1 to Sap3 and Sap4 to Sap6 expression in Candida albicans pleomorphic forms.</title>
        <authorList>
            <person name="Staniszewska M."/>
            <person name="Bondaryk M."/>
            <person name="Siennicka K."/>
            <person name="Kurek A."/>
            <person name="Orlowski J."/>
            <person name="Schaller M."/>
            <person name="Kurzatkowski W."/>
        </authorList>
    </citation>
    <scope>INDUCTION</scope>
</reference>
<reference key="13">
    <citation type="journal article" date="2013" name="Peptides">
        <title>Secreted aspartic peptidases of Candida albicans liberate bactericidal hemocidins from human hemoglobin.</title>
        <authorList>
            <person name="Bochenska O."/>
            <person name="Rapala-Kozik M."/>
            <person name="Wolak N."/>
            <person name="Bras G."/>
            <person name="Kozik A."/>
            <person name="Dubin A."/>
            <person name="Aoki W."/>
            <person name="Ueda M."/>
            <person name="Mak P."/>
        </authorList>
    </citation>
    <scope>FUNCTION</scope>
</reference>
<reference key="14">
    <citation type="journal article" date="2016" name="Acta Biochim. Pol.">
        <title>The action of ten secreted aspartic proteases of pathogenic yeast Candida albicans on major human salivary antimicrobial peptide, histatin 5.</title>
        <authorList>
            <person name="Bochenska O."/>
            <person name="Rapala-Kozik M."/>
            <person name="Wolak N."/>
            <person name="Aoki W."/>
            <person name="Ueda M."/>
            <person name="Kozik A."/>
        </authorList>
    </citation>
    <scope>FUNCTION</scope>
    <scope>CATALYTIC ACTIVITY</scope>
    <scope>BIOPHYSICOCHEMICAL PROPERTIES</scope>
</reference>
<accession>Q5A8N2</accession>
<accession>A0A1D8PQ73</accession>
<sequence>MFLQNILSVLAFALLIDAAPVKRSTGFVTLDFNVKRSLVDPKDPTVEVKRSPLFLDIEPTEIPVDDTGRNDVGKRGPVAVKLDNEIITYSADITIGSNNQKLSVIVDTGSSDLWVPDSNAVCIPKWPGDRGDFCKNNGSYSPAASSTSKNLNTPFEIKYADGSVAQGNLYQDTVGIGGVSVRDQLFANVRSTSAHKGILGIGFQSNEATRTPYDNLPITLKKQGIISKNAYSLFLNSPEASSGQIIFGGIDKAKYSGSLVDLPITSDRTLSVGLRSVNVMGQNVNVNAGVLLDSGTTISYFTPNIARSIIYALGGQVHYDSSGNEAYVADCKTSGTVDFQFDRNLKISVPASEFLYQLYYTNGEPYPKCEIRVRESEDNILGDNFMRSAYIVYDLDDRKISMAQVKYTSQSNIVAIN</sequence>